<name>NAGB_BACC2</name>
<gene>
    <name evidence="1" type="primary">nagB</name>
    <name type="ordered locus">BCG9842_B1075</name>
</gene>
<evidence type="ECO:0000255" key="1">
    <source>
        <dbReference type="HAMAP-Rule" id="MF_01241"/>
    </source>
</evidence>
<dbReference type="EC" id="3.5.99.6" evidence="1"/>
<dbReference type="EMBL" id="CP001186">
    <property type="protein sequence ID" value="ACK97072.1"/>
    <property type="molecule type" value="Genomic_DNA"/>
</dbReference>
<dbReference type="RefSeq" id="WP_001024215.1">
    <property type="nucleotide sequence ID" value="NC_011772.1"/>
</dbReference>
<dbReference type="SMR" id="B7IWG6"/>
<dbReference type="KEGG" id="bcg:BCG9842_B1075"/>
<dbReference type="HOGENOM" id="CLU_049611_1_0_9"/>
<dbReference type="UniPathway" id="UPA00629">
    <property type="reaction ID" value="UER00684"/>
</dbReference>
<dbReference type="Proteomes" id="UP000006744">
    <property type="component" value="Chromosome"/>
</dbReference>
<dbReference type="GO" id="GO:0005737">
    <property type="term" value="C:cytoplasm"/>
    <property type="evidence" value="ECO:0007669"/>
    <property type="project" value="TreeGrafter"/>
</dbReference>
<dbReference type="GO" id="GO:0004342">
    <property type="term" value="F:glucosamine-6-phosphate deaminase activity"/>
    <property type="evidence" value="ECO:0007669"/>
    <property type="project" value="UniProtKB-UniRule"/>
</dbReference>
<dbReference type="GO" id="GO:0042802">
    <property type="term" value="F:identical protein binding"/>
    <property type="evidence" value="ECO:0007669"/>
    <property type="project" value="TreeGrafter"/>
</dbReference>
<dbReference type="GO" id="GO:0005975">
    <property type="term" value="P:carbohydrate metabolic process"/>
    <property type="evidence" value="ECO:0007669"/>
    <property type="project" value="InterPro"/>
</dbReference>
<dbReference type="GO" id="GO:0006043">
    <property type="term" value="P:glucosamine catabolic process"/>
    <property type="evidence" value="ECO:0007669"/>
    <property type="project" value="TreeGrafter"/>
</dbReference>
<dbReference type="GO" id="GO:0006046">
    <property type="term" value="P:N-acetylglucosamine catabolic process"/>
    <property type="evidence" value="ECO:0007669"/>
    <property type="project" value="TreeGrafter"/>
</dbReference>
<dbReference type="GO" id="GO:0019262">
    <property type="term" value="P:N-acetylneuraminate catabolic process"/>
    <property type="evidence" value="ECO:0007669"/>
    <property type="project" value="UniProtKB-UniRule"/>
</dbReference>
<dbReference type="CDD" id="cd01399">
    <property type="entry name" value="GlcN6P_deaminase"/>
    <property type="match status" value="1"/>
</dbReference>
<dbReference type="FunFam" id="3.40.50.1360:FF:000003">
    <property type="entry name" value="Glucosamine-6-phosphate deaminase"/>
    <property type="match status" value="1"/>
</dbReference>
<dbReference type="Gene3D" id="3.40.50.1360">
    <property type="match status" value="1"/>
</dbReference>
<dbReference type="HAMAP" id="MF_01241">
    <property type="entry name" value="GlcN6P_deamin"/>
    <property type="match status" value="1"/>
</dbReference>
<dbReference type="InterPro" id="IPR006148">
    <property type="entry name" value="Glc/Gal-6P_isomerase"/>
</dbReference>
<dbReference type="InterPro" id="IPR004547">
    <property type="entry name" value="Glucosamine6P_isomerase"/>
</dbReference>
<dbReference type="InterPro" id="IPR018321">
    <property type="entry name" value="Glucosamine6P_isomerase_CS"/>
</dbReference>
<dbReference type="InterPro" id="IPR037171">
    <property type="entry name" value="NagB/RpiA_transferase-like"/>
</dbReference>
<dbReference type="NCBIfam" id="TIGR00502">
    <property type="entry name" value="nagB"/>
    <property type="match status" value="1"/>
</dbReference>
<dbReference type="NCBIfam" id="NF001682">
    <property type="entry name" value="PRK00443.1-1"/>
    <property type="match status" value="1"/>
</dbReference>
<dbReference type="PANTHER" id="PTHR11280">
    <property type="entry name" value="GLUCOSAMINE-6-PHOSPHATE ISOMERASE"/>
    <property type="match status" value="1"/>
</dbReference>
<dbReference type="PANTHER" id="PTHR11280:SF5">
    <property type="entry name" value="GLUCOSAMINE-6-PHOSPHATE ISOMERASE"/>
    <property type="match status" value="1"/>
</dbReference>
<dbReference type="Pfam" id="PF01182">
    <property type="entry name" value="Glucosamine_iso"/>
    <property type="match status" value="1"/>
</dbReference>
<dbReference type="SUPFAM" id="SSF100950">
    <property type="entry name" value="NagB/RpiA/CoA transferase-like"/>
    <property type="match status" value="1"/>
</dbReference>
<dbReference type="PROSITE" id="PS01161">
    <property type="entry name" value="GLC_GALNAC_ISOMERASE"/>
    <property type="match status" value="1"/>
</dbReference>
<accession>B7IWG6</accession>
<comment type="function">
    <text evidence="1">Catalyzes the reversible isomerization-deamination of glucosamine 6-phosphate (GlcN6P) to form fructose 6-phosphate (Fru6P) and ammonium ion.</text>
</comment>
<comment type="catalytic activity">
    <reaction evidence="1">
        <text>alpha-D-glucosamine 6-phosphate + H2O = beta-D-fructose 6-phosphate + NH4(+)</text>
        <dbReference type="Rhea" id="RHEA:12172"/>
        <dbReference type="ChEBI" id="CHEBI:15377"/>
        <dbReference type="ChEBI" id="CHEBI:28938"/>
        <dbReference type="ChEBI" id="CHEBI:57634"/>
        <dbReference type="ChEBI" id="CHEBI:75989"/>
        <dbReference type="EC" id="3.5.99.6"/>
    </reaction>
</comment>
<comment type="pathway">
    <text evidence="1">Amino-sugar metabolism; N-acetylneuraminate degradation; D-fructose 6-phosphate from N-acetylneuraminate: step 5/5.</text>
</comment>
<comment type="similarity">
    <text evidence="1">Belongs to the glucosamine/galactosamine-6-phosphate isomerase family. NagB subfamily.</text>
</comment>
<sequence length="262" mass="29085">MNILVVKTPEELAEVGYKLIEEVVKTKENPTLGMATGSSPLGIYAEMRKNKLDTSRVTTVNLDEYVNLPHEDKNSYHYFMQEQLFDHLPFKQTYVPNGMASDLEEECKRYEGILAANPVDLQILGIGENGHIGFNEPGTPFNSPTNIVELTESTRQANLRFFEKEEDVPTHAITMGIGSIMKAKQVLLVAMGAKKAEAVKELLQGEYSEECPATVLQRHPNVTVIADQEALSLCSEAIADEHRQVFTISDLLSDSRVGETAN</sequence>
<organism>
    <name type="scientific">Bacillus cereus (strain G9842)</name>
    <dbReference type="NCBI Taxonomy" id="405531"/>
    <lineage>
        <taxon>Bacteria</taxon>
        <taxon>Bacillati</taxon>
        <taxon>Bacillota</taxon>
        <taxon>Bacilli</taxon>
        <taxon>Bacillales</taxon>
        <taxon>Bacillaceae</taxon>
        <taxon>Bacillus</taxon>
        <taxon>Bacillus cereus group</taxon>
    </lineage>
</organism>
<feature type="chain" id="PRO_1000139755" description="Glucosamine-6-phosphate deaminase">
    <location>
        <begin position="1"/>
        <end position="262"/>
    </location>
</feature>
<feature type="active site" description="Proton acceptor; for enolization step" evidence="1">
    <location>
        <position position="63"/>
    </location>
</feature>
<feature type="active site" description="For ring-opening step" evidence="1">
    <location>
        <position position="129"/>
    </location>
</feature>
<feature type="active site" description="Proton acceptor; for ring-opening step" evidence="1">
    <location>
        <position position="131"/>
    </location>
</feature>
<feature type="active site" description="For ring-opening step" evidence="1">
    <location>
        <position position="136"/>
    </location>
</feature>
<reference key="1">
    <citation type="submission" date="2008-10" db="EMBL/GenBank/DDBJ databases">
        <title>Genome sequence of Bacillus cereus G9842.</title>
        <authorList>
            <person name="Dodson R.J."/>
            <person name="Durkin A.S."/>
            <person name="Rosovitz M.J."/>
            <person name="Rasko D.A."/>
            <person name="Hoffmaster A."/>
            <person name="Ravel J."/>
            <person name="Sutton G."/>
        </authorList>
    </citation>
    <scope>NUCLEOTIDE SEQUENCE [LARGE SCALE GENOMIC DNA]</scope>
    <source>
        <strain>G9842</strain>
    </source>
</reference>
<protein>
    <recommendedName>
        <fullName evidence="1">Glucosamine-6-phosphate deaminase</fullName>
        <ecNumber evidence="1">3.5.99.6</ecNumber>
    </recommendedName>
    <alternativeName>
        <fullName evidence="1">GlcN6P deaminase</fullName>
        <shortName evidence="1">GNPDA</shortName>
    </alternativeName>
    <alternativeName>
        <fullName evidence="1">Glucosamine-6-phosphate isomerase</fullName>
    </alternativeName>
</protein>
<proteinExistence type="inferred from homology"/>
<keyword id="KW-0119">Carbohydrate metabolism</keyword>
<keyword id="KW-0378">Hydrolase</keyword>